<reference key="1">
    <citation type="submission" date="2008-01" db="EMBL/GenBank/DDBJ databases">
        <title>Complete sequence of Shewanella halifaxensis HAW-EB4.</title>
        <authorList>
            <consortium name="US DOE Joint Genome Institute"/>
            <person name="Copeland A."/>
            <person name="Lucas S."/>
            <person name="Lapidus A."/>
            <person name="Glavina del Rio T."/>
            <person name="Dalin E."/>
            <person name="Tice H."/>
            <person name="Bruce D."/>
            <person name="Goodwin L."/>
            <person name="Pitluck S."/>
            <person name="Sims D."/>
            <person name="Brettin T."/>
            <person name="Detter J.C."/>
            <person name="Han C."/>
            <person name="Kuske C.R."/>
            <person name="Schmutz J."/>
            <person name="Larimer F."/>
            <person name="Land M."/>
            <person name="Hauser L."/>
            <person name="Kyrpides N."/>
            <person name="Kim E."/>
            <person name="Zhao J.-S."/>
            <person name="Richardson P."/>
        </authorList>
    </citation>
    <scope>NUCLEOTIDE SEQUENCE [LARGE SCALE GENOMIC DNA]</scope>
    <source>
        <strain>HAW-EB4</strain>
    </source>
</reference>
<organism>
    <name type="scientific">Shewanella halifaxensis (strain HAW-EB4)</name>
    <dbReference type="NCBI Taxonomy" id="458817"/>
    <lineage>
        <taxon>Bacteria</taxon>
        <taxon>Pseudomonadati</taxon>
        <taxon>Pseudomonadota</taxon>
        <taxon>Gammaproteobacteria</taxon>
        <taxon>Alteromonadales</taxon>
        <taxon>Shewanellaceae</taxon>
        <taxon>Shewanella</taxon>
    </lineage>
</organism>
<accession>B0TP70</accession>
<gene>
    <name evidence="1" type="primary">lpxB</name>
    <name type="ordered locus">Shal_2968</name>
</gene>
<name>LPXB_SHEHH</name>
<keyword id="KW-0328">Glycosyltransferase</keyword>
<keyword id="KW-0441">Lipid A biosynthesis</keyword>
<keyword id="KW-0444">Lipid biosynthesis</keyword>
<keyword id="KW-0443">Lipid metabolism</keyword>
<keyword id="KW-0808">Transferase</keyword>
<proteinExistence type="inferred from homology"/>
<dbReference type="EC" id="2.4.1.182" evidence="1"/>
<dbReference type="EMBL" id="CP000931">
    <property type="protein sequence ID" value="ABZ77517.1"/>
    <property type="molecule type" value="Genomic_DNA"/>
</dbReference>
<dbReference type="RefSeq" id="WP_012278044.1">
    <property type="nucleotide sequence ID" value="NC_010334.1"/>
</dbReference>
<dbReference type="SMR" id="B0TP70"/>
<dbReference type="STRING" id="458817.Shal_2968"/>
<dbReference type="CAZy" id="GT19">
    <property type="family name" value="Glycosyltransferase Family 19"/>
</dbReference>
<dbReference type="KEGG" id="shl:Shal_2968"/>
<dbReference type="eggNOG" id="COG0763">
    <property type="taxonomic scope" value="Bacteria"/>
</dbReference>
<dbReference type="HOGENOM" id="CLU_036577_3_0_6"/>
<dbReference type="OrthoDB" id="9801642at2"/>
<dbReference type="UniPathway" id="UPA00973"/>
<dbReference type="Proteomes" id="UP000001317">
    <property type="component" value="Chromosome"/>
</dbReference>
<dbReference type="GO" id="GO:0016020">
    <property type="term" value="C:membrane"/>
    <property type="evidence" value="ECO:0007669"/>
    <property type="project" value="GOC"/>
</dbReference>
<dbReference type="GO" id="GO:0008915">
    <property type="term" value="F:lipid-A-disaccharide synthase activity"/>
    <property type="evidence" value="ECO:0007669"/>
    <property type="project" value="UniProtKB-UniRule"/>
</dbReference>
<dbReference type="GO" id="GO:0005543">
    <property type="term" value="F:phospholipid binding"/>
    <property type="evidence" value="ECO:0007669"/>
    <property type="project" value="TreeGrafter"/>
</dbReference>
<dbReference type="GO" id="GO:0009245">
    <property type="term" value="P:lipid A biosynthetic process"/>
    <property type="evidence" value="ECO:0007669"/>
    <property type="project" value="UniProtKB-UniRule"/>
</dbReference>
<dbReference type="CDD" id="cd01635">
    <property type="entry name" value="Glycosyltransferase_GTB-type"/>
    <property type="match status" value="1"/>
</dbReference>
<dbReference type="Gene3D" id="3.40.50.2000">
    <property type="entry name" value="Glycogen Phosphorylase B"/>
    <property type="match status" value="1"/>
</dbReference>
<dbReference type="HAMAP" id="MF_00392">
    <property type="entry name" value="LpxB"/>
    <property type="match status" value="1"/>
</dbReference>
<dbReference type="InterPro" id="IPR003835">
    <property type="entry name" value="Glyco_trans_19"/>
</dbReference>
<dbReference type="NCBIfam" id="TIGR00215">
    <property type="entry name" value="lpxB"/>
    <property type="match status" value="1"/>
</dbReference>
<dbReference type="PANTHER" id="PTHR30372">
    <property type="entry name" value="LIPID-A-DISACCHARIDE SYNTHASE"/>
    <property type="match status" value="1"/>
</dbReference>
<dbReference type="PANTHER" id="PTHR30372:SF4">
    <property type="entry name" value="LIPID-A-DISACCHARIDE SYNTHASE, MITOCHONDRIAL-RELATED"/>
    <property type="match status" value="1"/>
</dbReference>
<dbReference type="Pfam" id="PF02684">
    <property type="entry name" value="LpxB"/>
    <property type="match status" value="1"/>
</dbReference>
<dbReference type="SUPFAM" id="SSF53756">
    <property type="entry name" value="UDP-Glycosyltransferase/glycogen phosphorylase"/>
    <property type="match status" value="1"/>
</dbReference>
<feature type="chain" id="PRO_1000080284" description="Lipid-A-disaccharide synthase">
    <location>
        <begin position="1"/>
        <end position="383"/>
    </location>
</feature>
<protein>
    <recommendedName>
        <fullName evidence="1">Lipid-A-disaccharide synthase</fullName>
        <ecNumber evidence="1">2.4.1.182</ecNumber>
    </recommendedName>
</protein>
<comment type="function">
    <text evidence="1">Condensation of UDP-2,3-diacylglucosamine and 2,3-diacylglucosamine-1-phosphate to form lipid A disaccharide, a precursor of lipid A, a phosphorylated glycolipid that anchors the lipopolysaccharide to the outer membrane of the cell.</text>
</comment>
<comment type="catalytic activity">
    <reaction evidence="1">
        <text>a lipid X + a UDP-2-N,3-O-bis[(3R)-3-hydroxyacyl]-alpha-D-glucosamine = a lipid A disaccharide + UDP + H(+)</text>
        <dbReference type="Rhea" id="RHEA:67828"/>
        <dbReference type="ChEBI" id="CHEBI:15378"/>
        <dbReference type="ChEBI" id="CHEBI:58223"/>
        <dbReference type="ChEBI" id="CHEBI:137748"/>
        <dbReference type="ChEBI" id="CHEBI:176338"/>
        <dbReference type="ChEBI" id="CHEBI:176343"/>
        <dbReference type="EC" id="2.4.1.182"/>
    </reaction>
</comment>
<comment type="pathway">
    <text evidence="1">Bacterial outer membrane biogenesis; LPS lipid A biosynthesis.</text>
</comment>
<comment type="similarity">
    <text evidence="1">Belongs to the LpxB family.</text>
</comment>
<sequence length="383" mass="42598">MSSNNPHVFAMVAGEISGDILGAGLIKALKTRYPDAKFVGIGGPRMEALGFESIFSYEELAVMGIVEVLSRLPRLLKVRATLIDELVKINPDCFIGIDAPDFNIGLELKLKNRGIKTVHYVSPSVWAWRPKRIFKIAKATDMVLSLLPFEKAFYDKHQVPCTFVGHTLADDIELESDKAQARELLGLDKEAEYLAILPGSRGGELKMLAEPFVKAASLIKQRYPDIKFVTPLVNQKRRDQFEQALREHAPDLEIDLVEGQSREVMAAADCILLASGTATLEAMLVKRPMVVAYRVSPITYRIAKGMMLTKRYSLPNLLADDDVVEELIQADCTPEKIATAVATQLDNDFSPMYDRFMQMHKSLRCDASARAADAVIKLVEDKV</sequence>
<evidence type="ECO:0000255" key="1">
    <source>
        <dbReference type="HAMAP-Rule" id="MF_00392"/>
    </source>
</evidence>